<name>MNTP_XYLFM</name>
<dbReference type="EMBL" id="CP000941">
    <property type="protein sequence ID" value="ACA12374.1"/>
    <property type="molecule type" value="Genomic_DNA"/>
</dbReference>
<dbReference type="RefSeq" id="WP_004083438.1">
    <property type="nucleotide sequence ID" value="NC_010513.1"/>
</dbReference>
<dbReference type="KEGG" id="xfm:Xfasm12_1452"/>
<dbReference type="HOGENOM" id="CLU_096410_0_0_6"/>
<dbReference type="GO" id="GO:0005886">
    <property type="term" value="C:plasma membrane"/>
    <property type="evidence" value="ECO:0007669"/>
    <property type="project" value="UniProtKB-SubCell"/>
</dbReference>
<dbReference type="GO" id="GO:0005384">
    <property type="term" value="F:manganese ion transmembrane transporter activity"/>
    <property type="evidence" value="ECO:0007669"/>
    <property type="project" value="UniProtKB-UniRule"/>
</dbReference>
<dbReference type="HAMAP" id="MF_01521">
    <property type="entry name" value="MntP_pump"/>
    <property type="match status" value="1"/>
</dbReference>
<dbReference type="InterPro" id="IPR003810">
    <property type="entry name" value="Mntp/YtaF"/>
</dbReference>
<dbReference type="InterPro" id="IPR022929">
    <property type="entry name" value="Put_MntP"/>
</dbReference>
<dbReference type="PANTHER" id="PTHR35529">
    <property type="entry name" value="MANGANESE EFFLUX PUMP MNTP-RELATED"/>
    <property type="match status" value="1"/>
</dbReference>
<dbReference type="PANTHER" id="PTHR35529:SF1">
    <property type="entry name" value="MANGANESE EFFLUX PUMP MNTP-RELATED"/>
    <property type="match status" value="1"/>
</dbReference>
<dbReference type="Pfam" id="PF02659">
    <property type="entry name" value="Mntp"/>
    <property type="match status" value="1"/>
</dbReference>
<evidence type="ECO:0000255" key="1">
    <source>
        <dbReference type="HAMAP-Rule" id="MF_01521"/>
    </source>
</evidence>
<sequence length="194" mass="20197">MSPITILLIGIAMSTDAFAAAIGKGAAIGKPRLRDALYVAVIFGVIETATPIAGWLLGQIASHYIAAFDHWIAFGLLSGLGIHMIINGLKNNGNTCKDNADTHNRNSRWLTLAATALATSIDAAAIGISLAFLDIHIGIVAAVIGLCTFTMVIFGVMLGRVLGTFVGNRAEIVGGIILIIVGSTILYEHLSNTG</sequence>
<comment type="function">
    <text evidence="1">Probably functions as a manganese efflux pump.</text>
</comment>
<comment type="subcellular location">
    <subcellularLocation>
        <location evidence="1">Cell inner membrane</location>
        <topology evidence="1">Multi-pass membrane protein</topology>
    </subcellularLocation>
</comment>
<comment type="similarity">
    <text evidence="1">Belongs to the MntP (TC 9.B.29) family.</text>
</comment>
<keyword id="KW-0997">Cell inner membrane</keyword>
<keyword id="KW-1003">Cell membrane</keyword>
<keyword id="KW-0406">Ion transport</keyword>
<keyword id="KW-0464">Manganese</keyword>
<keyword id="KW-0472">Membrane</keyword>
<keyword id="KW-0812">Transmembrane</keyword>
<keyword id="KW-1133">Transmembrane helix</keyword>
<keyword id="KW-0813">Transport</keyword>
<protein>
    <recommendedName>
        <fullName evidence="1">Putative manganese efflux pump MntP</fullName>
    </recommendedName>
</protein>
<accession>B0U3E5</accession>
<reference key="1">
    <citation type="journal article" date="2010" name="J. Bacteriol.">
        <title>Whole genome sequences of two Xylella fastidiosa strains (M12 and M23) causing almond leaf scorch disease in California.</title>
        <authorList>
            <person name="Chen J."/>
            <person name="Xie G."/>
            <person name="Han S."/>
            <person name="Chertkov O."/>
            <person name="Sims D."/>
            <person name="Civerolo E.L."/>
        </authorList>
    </citation>
    <scope>NUCLEOTIDE SEQUENCE [LARGE SCALE GENOMIC DNA]</scope>
    <source>
        <strain>M12</strain>
    </source>
</reference>
<organism>
    <name type="scientific">Xylella fastidiosa (strain M12)</name>
    <dbReference type="NCBI Taxonomy" id="405440"/>
    <lineage>
        <taxon>Bacteria</taxon>
        <taxon>Pseudomonadati</taxon>
        <taxon>Pseudomonadota</taxon>
        <taxon>Gammaproteobacteria</taxon>
        <taxon>Lysobacterales</taxon>
        <taxon>Lysobacteraceae</taxon>
        <taxon>Xylella</taxon>
    </lineage>
</organism>
<proteinExistence type="inferred from homology"/>
<gene>
    <name evidence="1" type="primary">mntP</name>
    <name type="ordered locus">Xfasm12_1452</name>
</gene>
<feature type="chain" id="PRO_1000200047" description="Putative manganese efflux pump MntP">
    <location>
        <begin position="1"/>
        <end position="194"/>
    </location>
</feature>
<feature type="transmembrane region" description="Helical" evidence="1">
    <location>
        <begin position="3"/>
        <end position="23"/>
    </location>
</feature>
<feature type="transmembrane region" description="Helical" evidence="1">
    <location>
        <begin position="37"/>
        <end position="57"/>
    </location>
</feature>
<feature type="transmembrane region" description="Helical" evidence="1">
    <location>
        <begin position="65"/>
        <end position="85"/>
    </location>
</feature>
<feature type="transmembrane region" description="Helical" evidence="1">
    <location>
        <begin position="112"/>
        <end position="132"/>
    </location>
</feature>
<feature type="transmembrane region" description="Helical" evidence="1">
    <location>
        <begin position="137"/>
        <end position="157"/>
    </location>
</feature>
<feature type="transmembrane region" description="Helical" evidence="1">
    <location>
        <begin position="170"/>
        <end position="190"/>
    </location>
</feature>